<evidence type="ECO:0000250" key="1"/>
<evidence type="ECO:0000305" key="2"/>
<comment type="function">
    <text evidence="1">GTP-binding protein that may be involved in protein trafficking. May modulate vesicle budding and uncoating within the Golgi apparatus (By similarity).</text>
</comment>
<comment type="subcellular location">
    <subcellularLocation>
        <location evidence="1">Golgi apparatus</location>
    </subcellularLocation>
</comment>
<comment type="similarity">
    <text evidence="2">Belongs to the small GTPase superfamily. Arf family.</text>
</comment>
<gene>
    <name type="primary">arrK</name>
    <name type="ORF">DDB_G0280633</name>
</gene>
<reference key="1">
    <citation type="journal article" date="2005" name="Nature">
        <title>The genome of the social amoeba Dictyostelium discoideum.</title>
        <authorList>
            <person name="Eichinger L."/>
            <person name="Pachebat J.A."/>
            <person name="Gloeckner G."/>
            <person name="Rajandream M.A."/>
            <person name="Sucgang R."/>
            <person name="Berriman M."/>
            <person name="Song J."/>
            <person name="Olsen R."/>
            <person name="Szafranski K."/>
            <person name="Xu Q."/>
            <person name="Tunggal B."/>
            <person name="Kummerfeld S."/>
            <person name="Madera M."/>
            <person name="Konfortov B.A."/>
            <person name="Rivero F."/>
            <person name="Bankier A.T."/>
            <person name="Lehmann R."/>
            <person name="Hamlin N."/>
            <person name="Davies R."/>
            <person name="Gaudet P."/>
            <person name="Fey P."/>
            <person name="Pilcher K."/>
            <person name="Chen G."/>
            <person name="Saunders D."/>
            <person name="Sodergren E.J."/>
            <person name="Davis P."/>
            <person name="Kerhornou A."/>
            <person name="Nie X."/>
            <person name="Hall N."/>
            <person name="Anjard C."/>
            <person name="Hemphill L."/>
            <person name="Bason N."/>
            <person name="Farbrother P."/>
            <person name="Desany B."/>
            <person name="Just E."/>
            <person name="Morio T."/>
            <person name="Rost R."/>
            <person name="Churcher C.M."/>
            <person name="Cooper J."/>
            <person name="Haydock S."/>
            <person name="van Driessche N."/>
            <person name="Cronin A."/>
            <person name="Goodhead I."/>
            <person name="Muzny D.M."/>
            <person name="Mourier T."/>
            <person name="Pain A."/>
            <person name="Lu M."/>
            <person name="Harper D."/>
            <person name="Lindsay R."/>
            <person name="Hauser H."/>
            <person name="James K.D."/>
            <person name="Quiles M."/>
            <person name="Madan Babu M."/>
            <person name="Saito T."/>
            <person name="Buchrieser C."/>
            <person name="Wardroper A."/>
            <person name="Felder M."/>
            <person name="Thangavelu M."/>
            <person name="Johnson D."/>
            <person name="Knights A."/>
            <person name="Loulseged H."/>
            <person name="Mungall K.L."/>
            <person name="Oliver K."/>
            <person name="Price C."/>
            <person name="Quail M.A."/>
            <person name="Urushihara H."/>
            <person name="Hernandez J."/>
            <person name="Rabbinowitsch E."/>
            <person name="Steffen D."/>
            <person name="Sanders M."/>
            <person name="Ma J."/>
            <person name="Kohara Y."/>
            <person name="Sharp S."/>
            <person name="Simmonds M.N."/>
            <person name="Spiegler S."/>
            <person name="Tivey A."/>
            <person name="Sugano S."/>
            <person name="White B."/>
            <person name="Walker D."/>
            <person name="Woodward J.R."/>
            <person name="Winckler T."/>
            <person name="Tanaka Y."/>
            <person name="Shaulsky G."/>
            <person name="Schleicher M."/>
            <person name="Weinstock G.M."/>
            <person name="Rosenthal A."/>
            <person name="Cox E.C."/>
            <person name="Chisholm R.L."/>
            <person name="Gibbs R.A."/>
            <person name="Loomis W.F."/>
            <person name="Platzer M."/>
            <person name="Kay R.R."/>
            <person name="Williams J.G."/>
            <person name="Dear P.H."/>
            <person name="Noegel A.A."/>
            <person name="Barrell B.G."/>
            <person name="Kuspa A."/>
        </authorList>
    </citation>
    <scope>NUCLEOTIDE SEQUENCE [LARGE SCALE GENOMIC DNA]</scope>
    <source>
        <strain>AX4</strain>
    </source>
</reference>
<protein>
    <recommendedName>
        <fullName>ADP-ribosylation factor K</fullName>
    </recommendedName>
</protein>
<dbReference type="EMBL" id="AAFI02000037">
    <property type="protein sequence ID" value="EAL67118.1"/>
    <property type="molecule type" value="Genomic_DNA"/>
</dbReference>
<dbReference type="RefSeq" id="XP_641090.1">
    <property type="nucleotide sequence ID" value="XM_635998.1"/>
</dbReference>
<dbReference type="SMR" id="Q54V41"/>
<dbReference type="FunCoup" id="Q54V41">
    <property type="interactions" value="5"/>
</dbReference>
<dbReference type="STRING" id="44689.Q54V41"/>
<dbReference type="PaxDb" id="44689-DDB0229373"/>
<dbReference type="EnsemblProtists" id="EAL67118">
    <property type="protein sequence ID" value="EAL67118"/>
    <property type="gene ID" value="DDB_G0280633"/>
</dbReference>
<dbReference type="GeneID" id="8622649"/>
<dbReference type="KEGG" id="ddi:DDB_G0280633"/>
<dbReference type="dictyBase" id="DDB_G0280633">
    <property type="gene designation" value="arrK"/>
</dbReference>
<dbReference type="VEuPathDB" id="AmoebaDB:DDB_G0280633"/>
<dbReference type="eggNOG" id="KOG0070">
    <property type="taxonomic scope" value="Eukaryota"/>
</dbReference>
<dbReference type="HOGENOM" id="CLU_040729_9_3_1"/>
<dbReference type="InParanoid" id="Q54V41"/>
<dbReference type="OMA" id="IRALWRC"/>
<dbReference type="PhylomeDB" id="Q54V41"/>
<dbReference type="Reactome" id="R-DDI-1660514">
    <property type="pathway name" value="Synthesis of PIPs at the Golgi membrane"/>
</dbReference>
<dbReference type="Reactome" id="R-DDI-199992">
    <property type="pathway name" value="trans-Golgi Network Vesicle Budding"/>
</dbReference>
<dbReference type="Reactome" id="R-DDI-5620916">
    <property type="pathway name" value="VxPx cargo-targeting to cilium"/>
</dbReference>
<dbReference type="Reactome" id="R-DDI-6807878">
    <property type="pathway name" value="COPI-mediated anterograde transport"/>
</dbReference>
<dbReference type="Reactome" id="R-DDI-6811434">
    <property type="pathway name" value="COPI-dependent Golgi-to-ER retrograde traffic"/>
</dbReference>
<dbReference type="Reactome" id="R-DDI-6811438">
    <property type="pathway name" value="Intra-Golgi traffic"/>
</dbReference>
<dbReference type="PRO" id="PR:Q54V41"/>
<dbReference type="Proteomes" id="UP000002195">
    <property type="component" value="Chromosome 3"/>
</dbReference>
<dbReference type="GO" id="GO:0005737">
    <property type="term" value="C:cytoplasm"/>
    <property type="evidence" value="ECO:0000318"/>
    <property type="project" value="GO_Central"/>
</dbReference>
<dbReference type="GO" id="GO:0005794">
    <property type="term" value="C:Golgi apparatus"/>
    <property type="evidence" value="ECO:0007669"/>
    <property type="project" value="UniProtKB-SubCell"/>
</dbReference>
<dbReference type="GO" id="GO:0005886">
    <property type="term" value="C:plasma membrane"/>
    <property type="evidence" value="ECO:0000318"/>
    <property type="project" value="GO_Central"/>
</dbReference>
<dbReference type="GO" id="GO:0005525">
    <property type="term" value="F:GTP binding"/>
    <property type="evidence" value="ECO:0000318"/>
    <property type="project" value="GO_Central"/>
</dbReference>
<dbReference type="GO" id="GO:0003924">
    <property type="term" value="F:GTPase activity"/>
    <property type="evidence" value="ECO:0007669"/>
    <property type="project" value="InterPro"/>
</dbReference>
<dbReference type="GO" id="GO:0006886">
    <property type="term" value="P:intracellular protein transport"/>
    <property type="evidence" value="ECO:0000318"/>
    <property type="project" value="GO_Central"/>
</dbReference>
<dbReference type="GO" id="GO:0016192">
    <property type="term" value="P:vesicle-mediated transport"/>
    <property type="evidence" value="ECO:0000318"/>
    <property type="project" value="GO_Central"/>
</dbReference>
<dbReference type="CDD" id="cd00878">
    <property type="entry name" value="Arf_Arl"/>
    <property type="match status" value="1"/>
</dbReference>
<dbReference type="FunFam" id="3.40.50.300:FF:000412">
    <property type="entry name" value="ADP-ribosylation factor 1"/>
    <property type="match status" value="1"/>
</dbReference>
<dbReference type="Gene3D" id="3.40.50.300">
    <property type="entry name" value="P-loop containing nucleotide triphosphate hydrolases"/>
    <property type="match status" value="1"/>
</dbReference>
<dbReference type="InterPro" id="IPR027417">
    <property type="entry name" value="P-loop_NTPase"/>
</dbReference>
<dbReference type="InterPro" id="IPR005225">
    <property type="entry name" value="Small_GTP-bd"/>
</dbReference>
<dbReference type="InterPro" id="IPR024156">
    <property type="entry name" value="Small_GTPase_ARF"/>
</dbReference>
<dbReference type="InterPro" id="IPR006689">
    <property type="entry name" value="Small_GTPase_ARF/SAR"/>
</dbReference>
<dbReference type="NCBIfam" id="TIGR00231">
    <property type="entry name" value="small_GTP"/>
    <property type="match status" value="1"/>
</dbReference>
<dbReference type="PANTHER" id="PTHR11711">
    <property type="entry name" value="ADP RIBOSYLATION FACTOR-RELATED"/>
    <property type="match status" value="1"/>
</dbReference>
<dbReference type="Pfam" id="PF00025">
    <property type="entry name" value="Arf"/>
    <property type="match status" value="1"/>
</dbReference>
<dbReference type="PRINTS" id="PR00328">
    <property type="entry name" value="SAR1GTPBP"/>
</dbReference>
<dbReference type="SMART" id="SM00177">
    <property type="entry name" value="ARF"/>
    <property type="match status" value="1"/>
</dbReference>
<dbReference type="SMART" id="SM00175">
    <property type="entry name" value="RAB"/>
    <property type="match status" value="1"/>
</dbReference>
<dbReference type="SMART" id="SM00178">
    <property type="entry name" value="SAR"/>
    <property type="match status" value="1"/>
</dbReference>
<dbReference type="SUPFAM" id="SSF52540">
    <property type="entry name" value="P-loop containing nucleoside triphosphate hydrolases"/>
    <property type="match status" value="1"/>
</dbReference>
<dbReference type="PROSITE" id="PS51417">
    <property type="entry name" value="ARF"/>
    <property type="match status" value="1"/>
</dbReference>
<keyword id="KW-0931">ER-Golgi transport</keyword>
<keyword id="KW-0333">Golgi apparatus</keyword>
<keyword id="KW-0342">GTP-binding</keyword>
<keyword id="KW-0547">Nucleotide-binding</keyword>
<keyword id="KW-0653">Protein transport</keyword>
<keyword id="KW-1185">Reference proteome</keyword>
<keyword id="KW-0813">Transport</keyword>
<feature type="chain" id="PRO_0000328147" description="ADP-ribosylation factor K">
    <location>
        <begin position="1"/>
        <end position="188"/>
    </location>
</feature>
<feature type="binding site" evidence="1">
    <location>
        <begin position="34"/>
        <end position="40"/>
    </location>
    <ligand>
        <name>GTP</name>
        <dbReference type="ChEBI" id="CHEBI:37565"/>
    </ligand>
</feature>
<feature type="binding site" evidence="1">
    <location>
        <begin position="75"/>
        <end position="79"/>
    </location>
    <ligand>
        <name>GTP</name>
        <dbReference type="ChEBI" id="CHEBI:37565"/>
    </ligand>
</feature>
<feature type="binding site" evidence="1">
    <location>
        <begin position="134"/>
        <end position="137"/>
    </location>
    <ligand>
        <name>GTP</name>
        <dbReference type="ChEBI" id="CHEBI:37565"/>
    </ligand>
</feature>
<sequence length="188" mass="21374">MLSEFFNSLASFFSNIFSLFEGKKDTRILMIGLDGAGKSTLLFKLKLGDVVLTIPTIGFNVETIVYKNLSMTVWDVGGQHKIRALWKHYYHGTNAIIFVVDSTDRERMDEVKEEIDNLLIQDELKGIQILVLANKQDMNNAMNTAEIVNSLNLNSIKDRKWYVQPCSAIRSDGIYEGFDWVANSLNNK</sequence>
<proteinExistence type="inferred from homology"/>
<accession>Q54V41</accession>
<name>ARFK_DICDI</name>
<organism>
    <name type="scientific">Dictyostelium discoideum</name>
    <name type="common">Social amoeba</name>
    <dbReference type="NCBI Taxonomy" id="44689"/>
    <lineage>
        <taxon>Eukaryota</taxon>
        <taxon>Amoebozoa</taxon>
        <taxon>Evosea</taxon>
        <taxon>Eumycetozoa</taxon>
        <taxon>Dictyostelia</taxon>
        <taxon>Dictyosteliales</taxon>
        <taxon>Dictyosteliaceae</taxon>
        <taxon>Dictyostelium</taxon>
    </lineage>
</organism>